<comment type="function">
    <text evidence="1 2">Catalyzes the conversion of methylglyoxal (MG) to D-lactate in a single glutathione (GSH)-independent step. Selective for MG, does not use glyoxal as substrate. Plays a role in detoxifying endogenously produced MG, particularly when glycerol is the principal carbon source (PubMed:24302734). Important for viability in stationary phase (By similarity).</text>
</comment>
<comment type="catalytic activity">
    <reaction evidence="2">
        <text>methylglyoxal + H2O = (R)-lactate + H(+)</text>
        <dbReference type="Rhea" id="RHEA:27754"/>
        <dbReference type="ChEBI" id="CHEBI:15377"/>
        <dbReference type="ChEBI" id="CHEBI:15378"/>
        <dbReference type="ChEBI" id="CHEBI:16004"/>
        <dbReference type="ChEBI" id="CHEBI:17158"/>
        <dbReference type="EC" id="4.2.1.130"/>
    </reaction>
</comment>
<comment type="biophysicochemical properties">
    <kinetics>
        <KM evidence="2">5.5 mM for methylglyoxal</KM>
        <text evidence="2">kcat is 7.8 sec(-1) with methylglyoxal as substrate.</text>
    </kinetics>
</comment>
<comment type="subunit">
    <text evidence="2">Monomer.</text>
</comment>
<comment type="disruption phenotype">
    <text evidence="2">Has a 3- to 5-fold increase in levels of intracellular methylglyoxal compared with wild-type cells grown in the same media.</text>
</comment>
<comment type="similarity">
    <text evidence="4">Belongs to the peptidase C56 family. HSP31-like subfamily.</text>
</comment>
<evidence type="ECO:0000250" key="1">
    <source>
        <dbReference type="UniProtKB" id="Q04432"/>
    </source>
</evidence>
<evidence type="ECO:0000269" key="2">
    <source>
    </source>
</evidence>
<evidence type="ECO:0000303" key="3">
    <source>
    </source>
</evidence>
<evidence type="ECO:0000305" key="4"/>
<evidence type="ECO:0000305" key="5">
    <source>
    </source>
</evidence>
<evidence type="ECO:0007829" key="6">
    <source>
        <dbReference type="PDB" id="4LRU"/>
    </source>
</evidence>
<reference key="1">
    <citation type="journal article" date="2004" name="Proc. Natl. Acad. Sci. U.S.A.">
        <title>The diploid genome sequence of Candida albicans.</title>
        <authorList>
            <person name="Jones T."/>
            <person name="Federspiel N.A."/>
            <person name="Chibana H."/>
            <person name="Dungan J."/>
            <person name="Kalman S."/>
            <person name="Magee B.B."/>
            <person name="Newport G."/>
            <person name="Thorstenson Y.R."/>
            <person name="Agabian N."/>
            <person name="Magee P.T."/>
            <person name="Davis R.W."/>
            <person name="Scherer S."/>
        </authorList>
    </citation>
    <scope>NUCLEOTIDE SEQUENCE [LARGE SCALE GENOMIC DNA]</scope>
    <source>
        <strain>SC5314 / ATCC MYA-2876</strain>
    </source>
</reference>
<reference key="2">
    <citation type="journal article" date="2007" name="Genome Biol.">
        <title>Assembly of the Candida albicans genome into sixteen supercontigs aligned on the eight chromosomes.</title>
        <authorList>
            <person name="van het Hoog M."/>
            <person name="Rast T.J."/>
            <person name="Martchenko M."/>
            <person name="Grindle S."/>
            <person name="Dignard D."/>
            <person name="Hogues H."/>
            <person name="Cuomo C."/>
            <person name="Berriman M."/>
            <person name="Scherer S."/>
            <person name="Magee B.B."/>
            <person name="Whiteway M."/>
            <person name="Chibana H."/>
            <person name="Nantel A."/>
            <person name="Magee P.T."/>
        </authorList>
    </citation>
    <scope>GENOME REANNOTATION</scope>
    <source>
        <strain>SC5314 / ATCC MYA-2876</strain>
    </source>
</reference>
<reference key="3">
    <citation type="journal article" date="2013" name="Genome Biol.">
        <title>Assembly of a phased diploid Candida albicans genome facilitates allele-specific measurements and provides a simple model for repeat and indel structure.</title>
        <authorList>
            <person name="Muzzey D."/>
            <person name="Schwartz K."/>
            <person name="Weissman J.S."/>
            <person name="Sherlock G."/>
        </authorList>
    </citation>
    <scope>NUCLEOTIDE SEQUENCE [LARGE SCALE GENOMIC DNA]</scope>
    <scope>GENOME REANNOTATION</scope>
    <source>
        <strain>SC5314 / ATCC MYA-2876</strain>
    </source>
</reference>
<reference key="4">
    <citation type="journal article" date="2014" name="J. Biol. Chem.">
        <title>A glutathione-independent glyoxalase of the DJ-1 superfamily plays an important role in managing metabolically generated methylglyoxal in Candida albicans.</title>
        <authorList>
            <person name="Hasim S."/>
            <person name="Hussin N.A."/>
            <person name="Alomar F."/>
            <person name="Bidasee K.R."/>
            <person name="Nickerson K.W."/>
            <person name="Wilson M.A."/>
        </authorList>
    </citation>
    <scope>X-RAY CRYSTALLOGRAPHY (1.60 ANGSTROMS)</scope>
    <scope>CATALYTIC ACTIVITY</scope>
    <scope>BIOPHYSICOCHEMICAL PROPERTIES</scope>
    <scope>SUBUNIT</scope>
    <scope>ACTIVE SITE</scope>
    <scope>MUTAGENESIS OF CYS-136 AND HIS-137</scope>
    <scope>DISRUPTION PHENOTYPE</scope>
</reference>
<gene>
    <name evidence="3" type="primary">GLX3</name>
    <name type="ordered locus">CAALFM_C302610CA</name>
    <name type="ORF">CaO19.251</name>
    <name type="ORF">CaO19.7882</name>
    <name type="ORF">orf19.251</name>
    <name type="ORF">orf19.7882</name>
</gene>
<dbReference type="EC" id="4.2.1.130" evidence="2"/>
<dbReference type="EMBL" id="CP017625">
    <property type="protein sequence ID" value="AOW28295.1"/>
    <property type="molecule type" value="Genomic_DNA"/>
</dbReference>
<dbReference type="RefSeq" id="XP_719950.2">
    <property type="nucleotide sequence ID" value="XM_714857.2"/>
</dbReference>
<dbReference type="PDB" id="4LRU">
    <property type="method" value="X-ray"/>
    <property type="resolution" value="1.60 A"/>
    <property type="chains" value="A=1-236"/>
</dbReference>
<dbReference type="PDBsum" id="4LRU"/>
<dbReference type="SMR" id="Q5AF03"/>
<dbReference type="FunCoup" id="Q5AF03">
    <property type="interactions" value="85"/>
</dbReference>
<dbReference type="STRING" id="237561.Q5AF03"/>
<dbReference type="EnsemblFungi" id="C3_02610C_A-T">
    <property type="protein sequence ID" value="C3_02610C_A-T-p1"/>
    <property type="gene ID" value="C3_02610C_A"/>
</dbReference>
<dbReference type="GeneID" id="3638325"/>
<dbReference type="KEGG" id="cal:CAALFM_C302610CA"/>
<dbReference type="CGD" id="CAL0000194072">
    <property type="gene designation" value="GLX3"/>
</dbReference>
<dbReference type="VEuPathDB" id="FungiDB:C3_02610C_A"/>
<dbReference type="eggNOG" id="ENOG502RZ3Y">
    <property type="taxonomic scope" value="Eukaryota"/>
</dbReference>
<dbReference type="HOGENOM" id="CLU_070319_1_0_1"/>
<dbReference type="InParanoid" id="Q5AF03"/>
<dbReference type="OrthoDB" id="543156at2759"/>
<dbReference type="EvolutionaryTrace" id="Q5AF03"/>
<dbReference type="PHI-base" id="PHI:8693"/>
<dbReference type="PRO" id="PR:Q5AF03"/>
<dbReference type="Proteomes" id="UP000000559">
    <property type="component" value="Chromosome 3"/>
</dbReference>
<dbReference type="GO" id="GO:0005737">
    <property type="term" value="C:cytoplasm"/>
    <property type="evidence" value="ECO:0000318"/>
    <property type="project" value="GO_Central"/>
</dbReference>
<dbReference type="GO" id="GO:0062040">
    <property type="term" value="C:fungal biofilm matrix"/>
    <property type="evidence" value="ECO:0000314"/>
    <property type="project" value="CGD"/>
</dbReference>
<dbReference type="GO" id="GO:0030446">
    <property type="term" value="C:hyphal cell wall"/>
    <property type="evidence" value="ECO:0000314"/>
    <property type="project" value="CGD"/>
</dbReference>
<dbReference type="GO" id="GO:0030445">
    <property type="term" value="C:yeast-form cell wall"/>
    <property type="evidence" value="ECO:0000314"/>
    <property type="project" value="CGD"/>
</dbReference>
<dbReference type="GO" id="GO:0019172">
    <property type="term" value="F:glyoxalase III activity"/>
    <property type="evidence" value="ECO:0000314"/>
    <property type="project" value="CGD"/>
</dbReference>
<dbReference type="GO" id="GO:0019243">
    <property type="term" value="P:methylglyoxal catabolic process to D-lactate via S-lactoyl-glutathione"/>
    <property type="evidence" value="ECO:0000314"/>
    <property type="project" value="CGD"/>
</dbReference>
<dbReference type="CDD" id="cd03147">
    <property type="entry name" value="GATase1_Ydr533c_like"/>
    <property type="match status" value="1"/>
</dbReference>
<dbReference type="FunFam" id="3.40.50.880:FF:000051">
    <property type="entry name" value="Glutathione-independent glyoxalase HSP31"/>
    <property type="match status" value="1"/>
</dbReference>
<dbReference type="Gene3D" id="3.40.50.880">
    <property type="match status" value="1"/>
</dbReference>
<dbReference type="InterPro" id="IPR029062">
    <property type="entry name" value="Class_I_gatase-like"/>
</dbReference>
<dbReference type="InterPro" id="IPR002818">
    <property type="entry name" value="DJ-1/PfpI"/>
</dbReference>
<dbReference type="InterPro" id="IPR050325">
    <property type="entry name" value="Prot/Nucl_acid_deglycase"/>
</dbReference>
<dbReference type="PANTHER" id="PTHR48094:SF11">
    <property type="entry name" value="GLUTATHIONE-INDEPENDENT GLYOXALASE HSP31-RELATED"/>
    <property type="match status" value="1"/>
</dbReference>
<dbReference type="PANTHER" id="PTHR48094">
    <property type="entry name" value="PROTEIN/NUCLEIC ACID DEGLYCASE DJ-1-RELATED"/>
    <property type="match status" value="1"/>
</dbReference>
<dbReference type="Pfam" id="PF01965">
    <property type="entry name" value="DJ-1_PfpI"/>
    <property type="match status" value="1"/>
</dbReference>
<dbReference type="SUPFAM" id="SSF52317">
    <property type="entry name" value="Class I glutamine amidotransferase-like"/>
    <property type="match status" value="1"/>
</dbReference>
<accession>Q5AF03</accession>
<accession>A0A1D8PJH1</accession>
<accession>Q5AEL7</accession>
<feature type="chain" id="PRO_0000432110" description="Glyoxalase 3">
    <location>
        <begin position="1"/>
        <end position="236"/>
    </location>
</feature>
<feature type="active site" evidence="5">
    <location>
        <position position="136"/>
    </location>
</feature>
<feature type="active site" evidence="5">
    <location>
        <position position="137"/>
    </location>
</feature>
<feature type="active site" evidence="5">
    <location>
        <position position="168"/>
    </location>
</feature>
<feature type="modified residue" description="Cysteine sulfinic acid (-SO2H)" evidence="1">
    <location>
        <position position="136"/>
    </location>
</feature>
<feature type="mutagenesis site" description="Abolishes catalytic activity." evidence="2">
    <original>C</original>
    <variation>S</variation>
    <location>
        <position position="136"/>
    </location>
</feature>
<feature type="mutagenesis site" description="Reduces catalytic activity by 75%." evidence="2">
    <original>H</original>
    <variation>F</variation>
    <location>
        <position position="137"/>
    </location>
</feature>
<feature type="strand" evidence="6">
    <location>
        <begin position="2"/>
        <end position="7"/>
    </location>
</feature>
<feature type="helix" evidence="6">
    <location>
        <begin position="26"/>
        <end position="39"/>
    </location>
</feature>
<feature type="strand" evidence="6">
    <location>
        <begin position="42"/>
        <end position="50"/>
    </location>
</feature>
<feature type="helix" evidence="6">
    <location>
        <begin position="56"/>
        <end position="58"/>
    </location>
</feature>
<feature type="turn" evidence="6">
    <location>
        <begin position="61"/>
        <end position="63"/>
    </location>
</feature>
<feature type="helix" evidence="6">
    <location>
        <begin position="66"/>
        <end position="73"/>
    </location>
</feature>
<feature type="helix" evidence="6">
    <location>
        <begin position="78"/>
        <end position="84"/>
    </location>
</feature>
<feature type="helix" evidence="6">
    <location>
        <begin position="89"/>
        <end position="91"/>
    </location>
</feature>
<feature type="helix" evidence="6">
    <location>
        <begin position="94"/>
        <end position="96"/>
    </location>
</feature>
<feature type="strand" evidence="6">
    <location>
        <begin position="98"/>
        <end position="102"/>
    </location>
</feature>
<feature type="helix" evidence="6">
    <location>
        <begin position="108"/>
        <end position="111"/>
    </location>
</feature>
<feature type="helix" evidence="6">
    <location>
        <begin position="112"/>
        <end position="114"/>
    </location>
</feature>
<feature type="helix" evidence="6">
    <location>
        <begin position="116"/>
        <end position="127"/>
    </location>
</feature>
<feature type="strand" evidence="6">
    <location>
        <begin position="131"/>
        <end position="135"/>
    </location>
</feature>
<feature type="helix" evidence="6">
    <location>
        <begin position="138"/>
        <end position="142"/>
    </location>
</feature>
<feature type="turn" evidence="6">
    <location>
        <begin position="148"/>
        <end position="150"/>
    </location>
</feature>
<feature type="strand" evidence="6">
    <location>
        <begin position="151"/>
        <end position="153"/>
    </location>
</feature>
<feature type="turn" evidence="6">
    <location>
        <begin position="154"/>
        <end position="157"/>
    </location>
</feature>
<feature type="helix" evidence="6">
    <location>
        <begin position="165"/>
        <end position="170"/>
    </location>
</feature>
<feature type="helix" evidence="6">
    <location>
        <begin position="174"/>
        <end position="179"/>
    </location>
</feature>
<feature type="helix" evidence="6">
    <location>
        <begin position="185"/>
        <end position="192"/>
    </location>
</feature>
<feature type="strand" evidence="6">
    <location>
        <begin position="207"/>
        <end position="210"/>
    </location>
</feature>
<feature type="strand" evidence="6">
    <location>
        <begin position="213"/>
        <end position="216"/>
    </location>
</feature>
<feature type="helix" evidence="6">
    <location>
        <begin position="219"/>
        <end position="221"/>
    </location>
</feature>
<feature type="helix" evidence="6">
    <location>
        <begin position="222"/>
        <end position="233"/>
    </location>
</feature>
<proteinExistence type="evidence at protein level"/>
<keyword id="KW-0002">3D-structure</keyword>
<keyword id="KW-0456">Lyase</keyword>
<keyword id="KW-0558">Oxidation</keyword>
<keyword id="KW-1185">Reference proteome</keyword>
<keyword id="KW-0346">Stress response</keyword>
<protein>
    <recommendedName>
        <fullName evidence="3">Glyoxalase 3</fullName>
        <ecNumber evidence="2">4.2.1.130</ecNumber>
    </recommendedName>
    <alternativeName>
        <fullName evidence="3">Glutathione-independent glyoxalase</fullName>
    </alternativeName>
</protein>
<organism>
    <name type="scientific">Candida albicans (strain SC5314 / ATCC MYA-2876)</name>
    <name type="common">Yeast</name>
    <dbReference type="NCBI Taxonomy" id="237561"/>
    <lineage>
        <taxon>Eukaryota</taxon>
        <taxon>Fungi</taxon>
        <taxon>Dikarya</taxon>
        <taxon>Ascomycota</taxon>
        <taxon>Saccharomycotina</taxon>
        <taxon>Pichiomycetes</taxon>
        <taxon>Debaryomycetaceae</taxon>
        <taxon>Candida/Lodderomyces clade</taxon>
        <taxon>Candida</taxon>
    </lineage>
</organism>
<name>HSP31_CANAL</name>
<sequence length="236" mass="25812">MVKVLLALTSYNETFYSDGKKTGVFVVEALHPFEVFRKKGYEIQLASETGTFGWDDHSVVPDFLNGEDKEIFDNVNSEFNVALKNLKKASDLDPNDYDIFFGSAGHGTLFDYPNAKDLQKIATTVYDKGGVVSAVCHGPAIFENLNDPKTGEPLIKGKKITGFTDIGEDILGVTDIMKKGNLLTIKQVAEKEGATYIEPEGPWDNFTVTDGRIVTGVNPQSAVKTAEDVIAAFECN</sequence>